<reference key="1">
    <citation type="journal article" date="1996" name="Biochim. Biophys. Acta">
        <title>Cloning and sequencing of a human cDNA encoding a putative transcription factor containing a bromodomain.</title>
        <authorList>
            <person name="Nielsen M.S."/>
            <person name="Petersen C.M."/>
            <person name="Gliemann J."/>
            <person name="Madsen P."/>
        </authorList>
    </citation>
    <scope>NUCLEOTIDE SEQUENCE [MRNA] (ISOFORM 3)</scope>
    <scope>TISSUE SPECIFICITY</scope>
    <scope>VARIANT ARG-1198</scope>
</reference>
<reference key="2">
    <citation type="journal article" date="2001" name="Genome Res.">
        <title>Towards a catalog of human genes and proteins: sequencing and analysis of 500 novel complete protein coding human cDNAs.</title>
        <authorList>
            <person name="Wiemann S."/>
            <person name="Weil B."/>
            <person name="Wellenreuther R."/>
            <person name="Gassenhuber J."/>
            <person name="Glassl S."/>
            <person name="Ansorge W."/>
            <person name="Boecher M."/>
            <person name="Bloecker H."/>
            <person name="Bauersachs S."/>
            <person name="Blum H."/>
            <person name="Lauber J."/>
            <person name="Duesterhoeft A."/>
            <person name="Beyer A."/>
            <person name="Koehrer K."/>
            <person name="Strack N."/>
            <person name="Mewes H.-W."/>
            <person name="Ottenwaelder B."/>
            <person name="Obermaier B."/>
            <person name="Tampe J."/>
            <person name="Heubner D."/>
            <person name="Wambutt R."/>
            <person name="Korn B."/>
            <person name="Klein M."/>
            <person name="Poustka A."/>
        </authorList>
    </citation>
    <scope>NUCLEOTIDE SEQUENCE [LARGE SCALE MRNA] (ISOFORM 1)</scope>
    <scope>VARIANT ARG-1198</scope>
    <source>
        <tissue>Testis</tissue>
    </source>
</reference>
<reference key="3">
    <citation type="submission" date="2005-03" db="EMBL/GenBank/DDBJ databases">
        <authorList>
            <person name="Totoki Y."/>
            <person name="Toyoda A."/>
            <person name="Takeda T."/>
            <person name="Sakaki Y."/>
            <person name="Tanaka A."/>
            <person name="Yokoyama S."/>
            <person name="Ohara O."/>
            <person name="Nagase T."/>
            <person name="Kikuno R.F."/>
        </authorList>
    </citation>
    <scope>NUCLEOTIDE SEQUENCE [LARGE SCALE MRNA] (ISOFORM 2)</scope>
    <scope>VARIANTS MET-490 AND ARG-1198</scope>
    <source>
        <tissue>Brain</tissue>
    </source>
</reference>
<reference key="4">
    <citation type="journal article" date="2004" name="Nature">
        <title>The DNA sequence and comparative analysis of human chromosome 5.</title>
        <authorList>
            <person name="Schmutz J."/>
            <person name="Martin J."/>
            <person name="Terry A."/>
            <person name="Couronne O."/>
            <person name="Grimwood J."/>
            <person name="Lowry S."/>
            <person name="Gordon L.A."/>
            <person name="Scott D."/>
            <person name="Xie G."/>
            <person name="Huang W."/>
            <person name="Hellsten U."/>
            <person name="Tran-Gyamfi M."/>
            <person name="She X."/>
            <person name="Prabhakar S."/>
            <person name="Aerts A."/>
            <person name="Altherr M."/>
            <person name="Bajorek E."/>
            <person name="Black S."/>
            <person name="Branscomb E."/>
            <person name="Caoile C."/>
            <person name="Challacombe J.F."/>
            <person name="Chan Y.M."/>
            <person name="Denys M."/>
            <person name="Detter J.C."/>
            <person name="Escobar J."/>
            <person name="Flowers D."/>
            <person name="Fotopulos D."/>
            <person name="Glavina T."/>
            <person name="Gomez M."/>
            <person name="Gonzales E."/>
            <person name="Goodstein D."/>
            <person name="Grigoriev I."/>
            <person name="Groza M."/>
            <person name="Hammon N."/>
            <person name="Hawkins T."/>
            <person name="Haydu L."/>
            <person name="Israni S."/>
            <person name="Jett J."/>
            <person name="Kadner K."/>
            <person name="Kimball H."/>
            <person name="Kobayashi A."/>
            <person name="Lopez F."/>
            <person name="Lou Y."/>
            <person name="Martinez D."/>
            <person name="Medina C."/>
            <person name="Morgan J."/>
            <person name="Nandkeshwar R."/>
            <person name="Noonan J.P."/>
            <person name="Pitluck S."/>
            <person name="Pollard M."/>
            <person name="Predki P."/>
            <person name="Priest J."/>
            <person name="Ramirez L."/>
            <person name="Retterer J."/>
            <person name="Rodriguez A."/>
            <person name="Rogers S."/>
            <person name="Salamov A."/>
            <person name="Salazar A."/>
            <person name="Thayer N."/>
            <person name="Tice H."/>
            <person name="Tsai M."/>
            <person name="Ustaszewska A."/>
            <person name="Vo N."/>
            <person name="Wheeler J."/>
            <person name="Wu K."/>
            <person name="Yang J."/>
            <person name="Dickson M."/>
            <person name="Cheng J.-F."/>
            <person name="Eichler E.E."/>
            <person name="Olsen A."/>
            <person name="Pennacchio L.A."/>
            <person name="Rokhsar D.S."/>
            <person name="Richardson P."/>
            <person name="Lucas S.M."/>
            <person name="Myers R.M."/>
            <person name="Rubin E.M."/>
        </authorList>
    </citation>
    <scope>NUCLEOTIDE SEQUENCE [LARGE SCALE GENOMIC DNA]</scope>
</reference>
<reference key="5">
    <citation type="journal article" date="2004" name="Genome Res.">
        <title>The status, quality, and expansion of the NIH full-length cDNA project: the Mammalian Gene Collection (MGC).</title>
        <authorList>
            <consortium name="The MGC Project Team"/>
        </authorList>
    </citation>
    <scope>NUCLEOTIDE SEQUENCE [LARGE SCALE MRNA] OF 2-1235 (ISOFORM 2)</scope>
    <scope>VARIANT ARG-1198</scope>
    <source>
        <tissue>Muscle</tissue>
    </source>
</reference>
<reference key="6">
    <citation type="journal article" date="1997" name="J. Biol. Chem.">
        <title>Isolation and characterization of a novel ligand-dependent thyroid hormone receptor-coactivating protein.</title>
        <authorList>
            <person name="Monden T."/>
            <person name="Wondisford F.E."/>
            <person name="Hollenberg A.N."/>
        </authorList>
    </citation>
    <scope>NUCLEOTIDE SEQUENCE [MRNA] OF 6-1235 (ISOFORM 2)</scope>
    <scope>INTERACTION WITH THRB</scope>
    <scope>VARIANT ARG-1198</scope>
    <source>
        <tissue>Brain</tissue>
    </source>
</reference>
<reference key="7">
    <citation type="submission" date="1995-12" db="EMBL/GenBank/DDBJ databases">
        <authorList>
            <person name="Nielsen M.S."/>
        </authorList>
    </citation>
    <scope>NUCLEOTIDE SEQUENCE [MRNA] OF 6-1235 (ISOFORM 4)</scope>
    <scope>VARIANT ARG-1198</scope>
    <source>
        <tissue>Skin</tissue>
    </source>
</reference>
<reference key="8">
    <citation type="journal article" date="2003" name="J. Biol. Chem.">
        <title>Identification of new subunits of the multiprotein mammalian TRRAP/TIP60-containing histone acetyltransferase complex.</title>
        <authorList>
            <person name="Cai Y."/>
            <person name="Jin J."/>
            <person name="Tomomori-Sato C."/>
            <person name="Sato S."/>
            <person name="Sorokina I."/>
            <person name="Parmely T.J."/>
            <person name="Conaway R.C."/>
            <person name="Conaway J.W."/>
        </authorList>
    </citation>
    <scope>PROTEIN SEQUENCE OF 34-44; 63-79; 83-98; 125-137; 138-148; 150-159; 270-295; 385-399; 485-493; 541-565; 576-604 AND 625-646</scope>
    <scope>IDENTIFICATION IN NUA4 COMPLEX (ISOFORM 2)</scope>
    <scope>IDENTIFICATION BY MASS SPECTROMETRY</scope>
</reference>
<reference key="9">
    <citation type="journal article" date="1999" name="Mol. Endocrinol.">
        <title>p120 acts as a specific coactivator for 9-cis-retinoic acid receptor (RXR) on peroxisome proliferator-activated receptor-gamma/RXR heterodimers.</title>
        <authorList>
            <person name="Monden T."/>
            <person name="Kishi M."/>
            <person name="Hosoya T."/>
            <person name="Satoh T."/>
            <person name="Wondisford F.E."/>
            <person name="Hollenberg A.N."/>
            <person name="Yamada M."/>
            <person name="Mori M."/>
        </authorList>
    </citation>
    <scope>FUNCTION</scope>
    <scope>INTERACTION WITH RXRA</scope>
</reference>
<reference key="10">
    <citation type="journal article" date="2004" name="Curr. Opin. Genet. Dev.">
        <title>The highly conserved and multifunctional NuA4 HAT complex.</title>
        <authorList>
            <person name="Doyon Y."/>
            <person name="Cote J."/>
        </authorList>
    </citation>
    <scope>REVIEW ON NUA4 COMPLEX</scope>
</reference>
<reference key="11">
    <citation type="journal article" date="2004" name="Mol. Cell. Biol.">
        <title>Structural and functional conservation of the NuA4 histone acetyltransferase complex from yeast to humans.</title>
        <authorList>
            <person name="Doyon Y."/>
            <person name="Selleck W."/>
            <person name="Lane W.S."/>
            <person name="Tan S."/>
            <person name="Cote J."/>
        </authorList>
    </citation>
    <scope>FUNCTION</scope>
    <scope>IDENTIFICATION BY MASS SPECTROMETRY</scope>
    <scope>IDENTIFICATION IN NUA4 COMPLEX (ISOFORMS 1 AND 2)</scope>
    <scope>IDENTIFICATION IN NUA4-RELATED SRCAP-CONTAINING COMPLEX</scope>
</reference>
<reference key="12">
    <citation type="journal article" date="2006" name="Cell">
        <title>Global, in vivo, and site-specific phosphorylation dynamics in signaling networks.</title>
        <authorList>
            <person name="Olsen J.V."/>
            <person name="Blagoev B."/>
            <person name="Gnad F."/>
            <person name="Macek B."/>
            <person name="Kumar C."/>
            <person name="Mortensen P."/>
            <person name="Mann M."/>
        </authorList>
    </citation>
    <scope>PHOSPHORYLATION [LARGE SCALE ANALYSIS] AT SER-637 AND SER-641</scope>
    <scope>IDENTIFICATION BY MASS SPECTROMETRY [LARGE SCALE ANALYSIS]</scope>
    <source>
        <tissue>Cervix carcinoma</tissue>
    </source>
</reference>
<reference key="13">
    <citation type="journal article" date="2008" name="J. Proteome Res.">
        <title>Phosphorylation analysis of primary human T lymphocytes using sequential IMAC and titanium oxide enrichment.</title>
        <authorList>
            <person name="Carrascal M."/>
            <person name="Ovelleiro D."/>
            <person name="Casas V."/>
            <person name="Gay M."/>
            <person name="Abian J."/>
        </authorList>
    </citation>
    <scope>PHOSPHORYLATION [LARGE SCALE ANALYSIS] AT SER-387</scope>
    <scope>IDENTIFICATION BY MASS SPECTROMETRY [LARGE SCALE ANALYSIS]</scope>
    <source>
        <tissue>T-cell</tissue>
    </source>
</reference>
<reference key="14">
    <citation type="journal article" date="2008" name="Proc. Natl. Acad. Sci. U.S.A.">
        <title>A quantitative atlas of mitotic phosphorylation.</title>
        <authorList>
            <person name="Dephoure N."/>
            <person name="Zhou C."/>
            <person name="Villen J."/>
            <person name="Beausoleil S.A."/>
            <person name="Bakalarski C.E."/>
            <person name="Elledge S.J."/>
            <person name="Gygi S.P."/>
        </authorList>
    </citation>
    <scope>PHOSPHORYLATION [LARGE SCALE ANALYSIS] AT THR-264; SER-268 AND SER-284 (ISOFORMS 2 AND 4)</scope>
    <scope>PHOSPHORYLATION [LARGE SCALE ANALYSIS] AT THR-124; SER-128 AND SER-144 (ISOFORM 3)</scope>
    <scope>IDENTIFICATION BY MASS SPECTROMETRY [LARGE SCALE ANALYSIS]</scope>
    <source>
        <tissue>Cervix carcinoma</tissue>
    </source>
</reference>
<reference key="15">
    <citation type="journal article" date="2009" name="Anal. Chem.">
        <title>Lys-N and trypsin cover complementary parts of the phosphoproteome in a refined SCX-based approach.</title>
        <authorList>
            <person name="Gauci S."/>
            <person name="Helbig A.O."/>
            <person name="Slijper M."/>
            <person name="Krijgsveld J."/>
            <person name="Heck A.J."/>
            <person name="Mohammed S."/>
        </authorList>
    </citation>
    <scope>IDENTIFICATION BY MASS SPECTROMETRY [LARGE SCALE ANALYSIS]</scope>
</reference>
<reference key="16">
    <citation type="journal article" date="2009" name="Sci. Signal.">
        <title>Quantitative phosphoproteomic analysis of T cell receptor signaling reveals system-wide modulation of protein-protein interactions.</title>
        <authorList>
            <person name="Mayya V."/>
            <person name="Lundgren D.H."/>
            <person name="Hwang S.-I."/>
            <person name="Rezaul K."/>
            <person name="Wu L."/>
            <person name="Eng J.K."/>
            <person name="Rodionov V."/>
            <person name="Han D.K."/>
        </authorList>
    </citation>
    <scope>PHOSPHORYLATION [LARGE SCALE ANALYSIS] AT THR-264 AND SER-268 (ISOFORMS 2 AND 4)</scope>
    <scope>PHOSPHORYLATION [LARGE SCALE ANALYSIS] AT THR-124 AND SER-128 (ISOFORM 3)</scope>
    <scope>IDENTIFICATION BY MASS SPECTROMETRY [LARGE SCALE ANALYSIS]</scope>
    <source>
        <tissue>Leukemic T-cell</tissue>
    </source>
</reference>
<reference key="17">
    <citation type="journal article" date="2009" name="Science">
        <title>Lysine acetylation targets protein complexes and co-regulates major cellular functions.</title>
        <authorList>
            <person name="Choudhary C."/>
            <person name="Kumar C."/>
            <person name="Gnad F."/>
            <person name="Nielsen M.L."/>
            <person name="Rehman M."/>
            <person name="Walther T.C."/>
            <person name="Olsen J.V."/>
            <person name="Mann M."/>
        </authorList>
    </citation>
    <scope>ACETYLATION [LARGE SCALE ANALYSIS] AT LYS-481</scope>
    <scope>IDENTIFICATION BY MASS SPECTROMETRY [LARGE SCALE ANALYSIS]</scope>
</reference>
<reference key="18">
    <citation type="journal article" date="2010" name="Sci. Signal.">
        <title>Quantitative phosphoproteomics reveals widespread full phosphorylation site occupancy during mitosis.</title>
        <authorList>
            <person name="Olsen J.V."/>
            <person name="Vermeulen M."/>
            <person name="Santamaria A."/>
            <person name="Kumar C."/>
            <person name="Miller M.L."/>
            <person name="Jensen L.J."/>
            <person name="Gnad F."/>
            <person name="Cox J."/>
            <person name="Jensen T.S."/>
            <person name="Nigg E.A."/>
            <person name="Brunak S."/>
            <person name="Mann M."/>
        </authorList>
    </citation>
    <scope>PHOSPHORYLATION [LARGE SCALE ANALYSIS] AT SER-621 AND SER-641</scope>
    <scope>PHOSPHORYLATION [LARGE SCALE ANALYSIS] AT SER-924 (ISOFORM 2)</scope>
    <scope>IDENTIFICATION BY MASS SPECTROMETRY [LARGE SCALE ANALYSIS]</scope>
    <source>
        <tissue>Cervix carcinoma</tissue>
    </source>
</reference>
<reference key="19">
    <citation type="journal article" date="2013" name="J. Proteome Res.">
        <title>Toward a comprehensive characterization of a human cancer cell phosphoproteome.</title>
        <authorList>
            <person name="Zhou H."/>
            <person name="Di Palma S."/>
            <person name="Preisinger C."/>
            <person name="Peng M."/>
            <person name="Polat A.N."/>
            <person name="Heck A.J."/>
            <person name="Mohammed S."/>
        </authorList>
    </citation>
    <scope>PHOSPHORYLATION [LARGE SCALE ANALYSIS] AT SER-387; SER-579 AND SER-621</scope>
    <scope>IDENTIFICATION BY MASS SPECTROMETRY [LARGE SCALE ANALYSIS]</scope>
    <source>
        <tissue>Cervix carcinoma</tissue>
        <tissue>Erythroleukemia</tissue>
    </source>
</reference>
<reference key="20">
    <citation type="journal article" date="2014" name="J. Proteomics">
        <title>An enzyme assisted RP-RPLC approach for in-depth analysis of human liver phosphoproteome.</title>
        <authorList>
            <person name="Bian Y."/>
            <person name="Song C."/>
            <person name="Cheng K."/>
            <person name="Dong M."/>
            <person name="Wang F."/>
            <person name="Huang J."/>
            <person name="Sun D."/>
            <person name="Wang L."/>
            <person name="Ye M."/>
            <person name="Zou H."/>
        </authorList>
    </citation>
    <scope>PHOSPHORYLATION [LARGE SCALE ANALYSIS] AT SER-637 AND SER-641</scope>
    <scope>PHOSPHORYLATION [LARGE SCALE ANALYSIS] AT THR-264 AND SER-268 (ISOFORMS 2 AND 4)</scope>
    <scope>PHOSPHORYLATION [LARGE SCALE ANALYSIS] AT THR-124 AND SER-128 (ISOFORM 3)</scope>
    <scope>IDENTIFICATION BY MASS SPECTROMETRY [LARGE SCALE ANALYSIS]</scope>
    <source>
        <tissue>Liver</tissue>
    </source>
</reference>
<reference key="21">
    <citation type="journal article" date="2014" name="Nat. Struct. Mol. Biol.">
        <title>Uncovering global SUMOylation signaling networks in a site-specific manner.</title>
        <authorList>
            <person name="Hendriks I.A."/>
            <person name="D'Souza R.C."/>
            <person name="Yang B."/>
            <person name="Verlaan-de Vries M."/>
            <person name="Mann M."/>
            <person name="Vertegaal A.C."/>
        </authorList>
    </citation>
    <scope>SUMOYLATION [LARGE SCALE ANALYSIS] AT LYS-481; LYS-509; LYS-575 AND LYS-612</scope>
    <scope>IDENTIFICATION BY MASS SPECTROMETRY [LARGE SCALE ANALYSIS]</scope>
</reference>
<reference key="22">
    <citation type="journal article" date="2014" name="Nature">
        <title>ANP32E is a histone chaperone that removes H2A.Z from chromatin.</title>
        <authorList>
            <person name="Obri A."/>
            <person name="Ouararhni K."/>
            <person name="Papin C."/>
            <person name="Diebold M.L."/>
            <person name="Padmanabhan K."/>
            <person name="Marek M."/>
            <person name="Stoll I."/>
            <person name="Roy L."/>
            <person name="Reilly P.T."/>
            <person name="Mak T.W."/>
            <person name="Dimitrov S."/>
            <person name="Romier C."/>
            <person name="Hamiche A."/>
        </authorList>
    </citation>
    <scope>FUNCTION</scope>
    <scope>IDENTIFICATION IN THE SWR1-LIKE COMPLEX</scope>
</reference>
<reference key="23">
    <citation type="journal article" date="2014" name="Proc. Natl. Acad. Sci. U.S.A.">
        <title>Mapping of SUMO sites and analysis of SUMOylation changes induced by external stimuli.</title>
        <authorList>
            <person name="Impens F."/>
            <person name="Radoshevich L."/>
            <person name="Cossart P."/>
            <person name="Ribet D."/>
        </authorList>
    </citation>
    <scope>SUMOYLATION [LARGE SCALE ANALYSIS] AT LYS-481</scope>
    <scope>IDENTIFICATION BY MASS SPECTROMETRY [LARGE SCALE ANALYSIS]</scope>
</reference>
<reference key="24">
    <citation type="journal article" date="2015" name="Cell Rep.">
        <title>SUMO-2 orchestrates chromatin modifiers in response to DNA damage.</title>
        <authorList>
            <person name="Hendriks I.A."/>
            <person name="Treffers L.W."/>
            <person name="Verlaan-de Vries M."/>
            <person name="Olsen J.V."/>
            <person name="Vertegaal A.C."/>
        </authorList>
    </citation>
    <scope>SUMOYLATION [LARGE SCALE ANALYSIS] AT LYS-481 AND LYS-612</scope>
    <scope>IDENTIFICATION BY MASS SPECTROMETRY [LARGE SCALE ANALYSIS]</scope>
</reference>
<reference key="25">
    <citation type="journal article" date="2015" name="Genes Dev.">
        <title>Screen identifies bromodomain protein ZMYND8 in chromatin recognition of transcription-associated DNA damage that promotes homologous recombination.</title>
        <authorList>
            <person name="Gong F."/>
            <person name="Chiu L.Y."/>
            <person name="Cox B."/>
            <person name="Aymard F."/>
            <person name="Clouaire T."/>
            <person name="Leung J.W."/>
            <person name="Cammarata M."/>
            <person name="Perez M."/>
            <person name="Agarwal P."/>
            <person name="Brodbelt J.S."/>
            <person name="Legube G."/>
            <person name="Miller K.M."/>
        </authorList>
    </citation>
    <scope>SUBCELLULAR LOCATION</scope>
</reference>
<reference key="26">
    <citation type="journal article" date="2015" name="Mol. Cell. Proteomics">
        <title>System-wide analysis of SUMOylation dynamics in response to replication stress reveals novel small ubiquitin-like modified target proteins and acceptor lysines relevant for genome stability.</title>
        <authorList>
            <person name="Xiao Z."/>
            <person name="Chang J.G."/>
            <person name="Hendriks I.A."/>
            <person name="Sigurdsson J.O."/>
            <person name="Olsen J.V."/>
            <person name="Vertegaal A.C."/>
        </authorList>
    </citation>
    <scope>SUMOYLATION [LARGE SCALE ANALYSIS] AT LYS-481</scope>
    <scope>IDENTIFICATION BY MASS SPECTROMETRY [LARGE SCALE ANALYSIS]</scope>
</reference>
<reference key="27">
    <citation type="journal article" date="2017" name="Nat. Struct. Mol. Biol.">
        <title>Site-specific mapping of the human SUMO proteome reveals co-modification with phosphorylation.</title>
        <authorList>
            <person name="Hendriks I.A."/>
            <person name="Lyon D."/>
            <person name="Young C."/>
            <person name="Jensen L.J."/>
            <person name="Vertegaal A.C."/>
            <person name="Nielsen M.L."/>
        </authorList>
    </citation>
    <scope>SUMOYLATION [LARGE SCALE ANALYSIS] AT LYS-469; LYS-481; LYS-509; LYS-575 AND LYS-612</scope>
    <scope>IDENTIFICATION BY MASS SPECTROMETRY [LARGE SCALE ANALYSIS]</scope>
</reference>
<name>BRD8_HUMAN</name>
<organism>
    <name type="scientific">Homo sapiens</name>
    <name type="common">Human</name>
    <dbReference type="NCBI Taxonomy" id="9606"/>
    <lineage>
        <taxon>Eukaryota</taxon>
        <taxon>Metazoa</taxon>
        <taxon>Chordata</taxon>
        <taxon>Craniata</taxon>
        <taxon>Vertebrata</taxon>
        <taxon>Euteleostomi</taxon>
        <taxon>Mammalia</taxon>
        <taxon>Eutheria</taxon>
        <taxon>Euarchontoglires</taxon>
        <taxon>Primates</taxon>
        <taxon>Haplorrhini</taxon>
        <taxon>Catarrhini</taxon>
        <taxon>Hominidae</taxon>
        <taxon>Homo</taxon>
    </lineage>
</organism>
<dbReference type="EMBL" id="X87613">
    <property type="protein sequence ID" value="CAA60949.1"/>
    <property type="molecule type" value="mRNA"/>
</dbReference>
<dbReference type="EMBL" id="AL136823">
    <property type="protein sequence ID" value="CAB66757.1"/>
    <property type="molecule type" value="mRNA"/>
</dbReference>
<dbReference type="EMBL" id="AB209079">
    <property type="protein sequence ID" value="BAD92316.1"/>
    <property type="molecule type" value="mRNA"/>
</dbReference>
<dbReference type="EMBL" id="AC109442">
    <property type="status" value="NOT_ANNOTATED_CDS"/>
    <property type="molecule type" value="Genomic_DNA"/>
</dbReference>
<dbReference type="EMBL" id="AC113382">
    <property type="status" value="NOT_ANNOTATED_CDS"/>
    <property type="molecule type" value="Genomic_DNA"/>
</dbReference>
<dbReference type="EMBL" id="BC008039">
    <property type="protein sequence ID" value="AAH08039.1"/>
    <property type="status" value="ALT_INIT"/>
    <property type="molecule type" value="mRNA"/>
</dbReference>
<dbReference type="EMBL" id="BC008076">
    <property type="protein sequence ID" value="AAH08076.1"/>
    <property type="status" value="ALT_INIT"/>
    <property type="molecule type" value="mRNA"/>
</dbReference>
<dbReference type="EMBL" id="AF016270">
    <property type="protein sequence ID" value="AAB87858.1"/>
    <property type="status" value="ALT_INIT"/>
    <property type="molecule type" value="mRNA"/>
</dbReference>
<dbReference type="EMBL" id="X94234">
    <property type="protein sequence ID" value="CAA63925.1"/>
    <property type="status" value="ALT_INIT"/>
    <property type="molecule type" value="mRNA"/>
</dbReference>
<dbReference type="CCDS" id="CCDS34241.1">
    <molecule id="Q9H0E9-2"/>
</dbReference>
<dbReference type="CCDS" id="CCDS4198.1">
    <molecule id="Q9H0E9-1"/>
</dbReference>
<dbReference type="CCDS" id="CCDS54907.1">
    <molecule id="Q9H0E9-4"/>
</dbReference>
<dbReference type="PIR" id="S58225">
    <property type="entry name" value="S58225"/>
</dbReference>
<dbReference type="PIR" id="S68142">
    <property type="entry name" value="S68142"/>
</dbReference>
<dbReference type="RefSeq" id="NP_001157798.1">
    <molecule id="Q9H0E9-4"/>
    <property type="nucleotide sequence ID" value="NM_001164326.2"/>
</dbReference>
<dbReference type="RefSeq" id="NP_001287890.1">
    <property type="nucleotide sequence ID" value="NM_001300961.1"/>
</dbReference>
<dbReference type="RefSeq" id="NP_001287891.1">
    <property type="nucleotide sequence ID" value="NM_001300962.1"/>
</dbReference>
<dbReference type="RefSeq" id="NP_001287895.1">
    <molecule id="Q9H0E9-3"/>
    <property type="nucleotide sequence ID" value="NM_001300966.3"/>
</dbReference>
<dbReference type="RefSeq" id="NP_006687.3">
    <molecule id="Q9H0E9-2"/>
    <property type="nucleotide sequence ID" value="NM_006696.3"/>
</dbReference>
<dbReference type="RefSeq" id="NP_631938.2">
    <molecule id="Q9H0E9-1"/>
    <property type="nucleotide sequence ID" value="NM_139199.2"/>
</dbReference>
<dbReference type="SMR" id="Q9H0E9"/>
<dbReference type="BioGRID" id="116108">
    <property type="interactions" value="148"/>
</dbReference>
<dbReference type="ComplexPortal" id="CPX-978">
    <property type="entry name" value="NuA4 histone acetyltransferase complex"/>
</dbReference>
<dbReference type="CORUM" id="Q9H0E9"/>
<dbReference type="DIP" id="DIP-31762N"/>
<dbReference type="FunCoup" id="Q9H0E9">
    <property type="interactions" value="4548"/>
</dbReference>
<dbReference type="IntAct" id="Q9H0E9">
    <property type="interactions" value="70"/>
</dbReference>
<dbReference type="MINT" id="Q9H0E9"/>
<dbReference type="STRING" id="9606.ENSP00000254900"/>
<dbReference type="BindingDB" id="Q9H0E9"/>
<dbReference type="ChEMBL" id="CHEMBL3588731"/>
<dbReference type="GlyCosmos" id="Q9H0E9">
    <property type="glycosylation" value="7 sites, 2 glycans"/>
</dbReference>
<dbReference type="GlyGen" id="Q9H0E9">
    <property type="glycosylation" value="12 sites, 2 O-linked glycans (11 sites)"/>
</dbReference>
<dbReference type="iPTMnet" id="Q9H0E9"/>
<dbReference type="PhosphoSitePlus" id="Q9H0E9"/>
<dbReference type="SwissPalm" id="Q9H0E9"/>
<dbReference type="BioMuta" id="BRD8"/>
<dbReference type="DMDM" id="313104080"/>
<dbReference type="jPOST" id="Q9H0E9"/>
<dbReference type="MassIVE" id="Q9H0E9"/>
<dbReference type="PaxDb" id="9606-ENSP00000254900"/>
<dbReference type="PeptideAtlas" id="Q9H0E9"/>
<dbReference type="ProteomicsDB" id="80265">
    <molecule id="Q9H0E9-1"/>
</dbReference>
<dbReference type="ProteomicsDB" id="80266">
    <molecule id="Q9H0E9-2"/>
</dbReference>
<dbReference type="ProteomicsDB" id="80267">
    <molecule id="Q9H0E9-3"/>
</dbReference>
<dbReference type="ProteomicsDB" id="80268">
    <molecule id="Q9H0E9-4"/>
</dbReference>
<dbReference type="Pumba" id="Q9H0E9"/>
<dbReference type="Antibodypedia" id="678">
    <property type="antibodies" value="192 antibodies from 28 providers"/>
</dbReference>
<dbReference type="DNASU" id="10902"/>
<dbReference type="Ensembl" id="ENST00000230901.9">
    <molecule id="Q9H0E9-2"/>
    <property type="protein sequence ID" value="ENSP00000230901.5"/>
    <property type="gene ID" value="ENSG00000112983.18"/>
</dbReference>
<dbReference type="Ensembl" id="ENST00000254900.10">
    <molecule id="Q9H0E9-1"/>
    <property type="protein sequence ID" value="ENSP00000254900.5"/>
    <property type="gene ID" value="ENSG00000112983.18"/>
</dbReference>
<dbReference type="Ensembl" id="ENST00000411594.6">
    <molecule id="Q9H0E9-4"/>
    <property type="protein sequence ID" value="ENSP00000394330.2"/>
    <property type="gene ID" value="ENSG00000112983.18"/>
</dbReference>
<dbReference type="GeneID" id="10902"/>
<dbReference type="KEGG" id="hsa:10902"/>
<dbReference type="MANE-Select" id="ENST00000254900.10">
    <property type="protein sequence ID" value="ENSP00000254900.5"/>
    <property type="RefSeq nucleotide sequence ID" value="NM_139199.2"/>
    <property type="RefSeq protein sequence ID" value="NP_631938.2"/>
</dbReference>
<dbReference type="UCSC" id="uc003lcf.2">
    <molecule id="Q9H0E9-1"/>
    <property type="organism name" value="human"/>
</dbReference>
<dbReference type="AGR" id="HGNC:19874"/>
<dbReference type="CTD" id="10902"/>
<dbReference type="DisGeNET" id="10902"/>
<dbReference type="GeneCards" id="BRD8"/>
<dbReference type="HGNC" id="HGNC:19874">
    <property type="gene designation" value="BRD8"/>
</dbReference>
<dbReference type="HPA" id="ENSG00000112983">
    <property type="expression patterns" value="Low tissue specificity"/>
</dbReference>
<dbReference type="MIM" id="602848">
    <property type="type" value="gene"/>
</dbReference>
<dbReference type="neXtProt" id="NX_Q9H0E9"/>
<dbReference type="OpenTargets" id="ENSG00000112983"/>
<dbReference type="PharmGKB" id="PA134923194"/>
<dbReference type="VEuPathDB" id="HostDB:ENSG00000112983"/>
<dbReference type="eggNOG" id="ENOG502QRPS">
    <property type="taxonomic scope" value="Eukaryota"/>
</dbReference>
<dbReference type="GeneTree" id="ENSGT00530000064262"/>
<dbReference type="InParanoid" id="Q9H0E9"/>
<dbReference type="OMA" id="AYKPHTT"/>
<dbReference type="OrthoDB" id="1742084at2759"/>
<dbReference type="PAN-GO" id="Q9H0E9">
    <property type="GO annotations" value="2 GO annotations based on evolutionary models"/>
</dbReference>
<dbReference type="PhylomeDB" id="Q9H0E9"/>
<dbReference type="TreeFam" id="TF106422"/>
<dbReference type="PathwayCommons" id="Q9H0E9"/>
<dbReference type="Reactome" id="R-HSA-3214847">
    <property type="pathway name" value="HATs acetylate histones"/>
</dbReference>
<dbReference type="SignaLink" id="Q9H0E9"/>
<dbReference type="SIGNOR" id="Q9H0E9"/>
<dbReference type="BioGRID-ORCS" id="10902">
    <property type="hits" value="291 hits in 1183 CRISPR screens"/>
</dbReference>
<dbReference type="ChiTaRS" id="BRD8">
    <property type="organism name" value="human"/>
</dbReference>
<dbReference type="GeneWiki" id="BRD8"/>
<dbReference type="GenomeRNAi" id="10902"/>
<dbReference type="Pharos" id="Q9H0E9">
    <property type="development level" value="Tbio"/>
</dbReference>
<dbReference type="PRO" id="PR:Q9H0E9"/>
<dbReference type="Proteomes" id="UP000005640">
    <property type="component" value="Chromosome 5"/>
</dbReference>
<dbReference type="RNAct" id="Q9H0E9">
    <property type="molecule type" value="protein"/>
</dbReference>
<dbReference type="Bgee" id="ENSG00000112983">
    <property type="expression patterns" value="Expressed in right testis and 210 other cell types or tissues"/>
</dbReference>
<dbReference type="ExpressionAtlas" id="Q9H0E9">
    <property type="expression patterns" value="baseline and differential"/>
</dbReference>
<dbReference type="GO" id="GO:0005739">
    <property type="term" value="C:mitochondrion"/>
    <property type="evidence" value="ECO:0000314"/>
    <property type="project" value="HPA"/>
</dbReference>
<dbReference type="GO" id="GO:0035267">
    <property type="term" value="C:NuA4 histone acetyltransferase complex"/>
    <property type="evidence" value="ECO:0000314"/>
    <property type="project" value="UniProtKB"/>
</dbReference>
<dbReference type="GO" id="GO:0005654">
    <property type="term" value="C:nucleoplasm"/>
    <property type="evidence" value="ECO:0000314"/>
    <property type="project" value="HPA"/>
</dbReference>
<dbReference type="GO" id="GO:0000786">
    <property type="term" value="C:nucleosome"/>
    <property type="evidence" value="ECO:0000314"/>
    <property type="project" value="ComplexPortal"/>
</dbReference>
<dbReference type="GO" id="GO:0005634">
    <property type="term" value="C:nucleus"/>
    <property type="evidence" value="ECO:0000314"/>
    <property type="project" value="UniProtKB"/>
</dbReference>
<dbReference type="GO" id="GO:0000812">
    <property type="term" value="C:Swr1 complex"/>
    <property type="evidence" value="ECO:0000314"/>
    <property type="project" value="UniProtKB"/>
</dbReference>
<dbReference type="GO" id="GO:0046966">
    <property type="term" value="F:nuclear thyroid hormone receptor binding"/>
    <property type="evidence" value="ECO:0000353"/>
    <property type="project" value="ARUK-UCL"/>
</dbReference>
<dbReference type="GO" id="GO:0003713">
    <property type="term" value="F:transcription coactivator activity"/>
    <property type="evidence" value="ECO:0000314"/>
    <property type="project" value="ARUK-UCL"/>
</dbReference>
<dbReference type="GO" id="GO:0007166">
    <property type="term" value="P:cell surface receptor signaling pathway"/>
    <property type="evidence" value="ECO:0000304"/>
    <property type="project" value="ProtInc"/>
</dbReference>
<dbReference type="GO" id="GO:0097067">
    <property type="term" value="P:cellular response to thyroid hormone stimulus"/>
    <property type="evidence" value="ECO:0000314"/>
    <property type="project" value="ARUK-UCL"/>
</dbReference>
<dbReference type="GO" id="GO:0006325">
    <property type="term" value="P:chromatin organization"/>
    <property type="evidence" value="ECO:0007669"/>
    <property type="project" value="UniProtKB-KW"/>
</dbReference>
<dbReference type="GO" id="GO:0045893">
    <property type="term" value="P:positive regulation of DNA-templated transcription"/>
    <property type="evidence" value="ECO:0000303"/>
    <property type="project" value="ComplexPortal"/>
</dbReference>
<dbReference type="GO" id="GO:1905168">
    <property type="term" value="P:positive regulation of double-strand break repair via homologous recombination"/>
    <property type="evidence" value="ECO:0000314"/>
    <property type="project" value="ComplexPortal"/>
</dbReference>
<dbReference type="GO" id="GO:0045944">
    <property type="term" value="P:positive regulation of transcription by RNA polymerase II"/>
    <property type="evidence" value="ECO:0000314"/>
    <property type="project" value="ARUK-UCL"/>
</dbReference>
<dbReference type="GO" id="GO:0042981">
    <property type="term" value="P:regulation of apoptotic process"/>
    <property type="evidence" value="ECO:0000303"/>
    <property type="project" value="ComplexPortal"/>
</dbReference>
<dbReference type="GO" id="GO:0051726">
    <property type="term" value="P:regulation of cell cycle"/>
    <property type="evidence" value="ECO:0000315"/>
    <property type="project" value="ComplexPortal"/>
</dbReference>
<dbReference type="GO" id="GO:2000779">
    <property type="term" value="P:regulation of double-strand break repair"/>
    <property type="evidence" value="ECO:0000303"/>
    <property type="project" value="ComplexPortal"/>
</dbReference>
<dbReference type="CDD" id="cd05507">
    <property type="entry name" value="Bromo_brd8_like"/>
    <property type="match status" value="2"/>
</dbReference>
<dbReference type="FunFam" id="1.20.920.10:FF:000016">
    <property type="entry name" value="bromodomain-containing protein 8 isoform X1"/>
    <property type="match status" value="1"/>
</dbReference>
<dbReference type="Gene3D" id="1.20.920.10">
    <property type="entry name" value="Bromodomain-like"/>
    <property type="match status" value="2"/>
</dbReference>
<dbReference type="InterPro" id="IPR037966">
    <property type="entry name" value="Brd8_Bromo_dom"/>
</dbReference>
<dbReference type="InterPro" id="IPR001487">
    <property type="entry name" value="Bromodomain"/>
</dbReference>
<dbReference type="InterPro" id="IPR036427">
    <property type="entry name" value="Bromodomain-like_sf"/>
</dbReference>
<dbReference type="PANTHER" id="PTHR15398">
    <property type="entry name" value="BROMODOMAIN-CONTAINING PROTEIN 8"/>
    <property type="match status" value="1"/>
</dbReference>
<dbReference type="PANTHER" id="PTHR15398:SF13">
    <property type="entry name" value="BROMODOMAIN-CONTAINING PROTEIN 8"/>
    <property type="match status" value="1"/>
</dbReference>
<dbReference type="Pfam" id="PF00439">
    <property type="entry name" value="Bromodomain"/>
    <property type="match status" value="2"/>
</dbReference>
<dbReference type="PRINTS" id="PR00503">
    <property type="entry name" value="BROMODOMAIN"/>
</dbReference>
<dbReference type="SMART" id="SM00297">
    <property type="entry name" value="BROMO"/>
    <property type="match status" value="2"/>
</dbReference>
<dbReference type="SUPFAM" id="SSF47370">
    <property type="entry name" value="Bromodomain"/>
    <property type="match status" value="2"/>
</dbReference>
<dbReference type="PROSITE" id="PS50014">
    <property type="entry name" value="BROMODOMAIN_2"/>
    <property type="match status" value="2"/>
</dbReference>
<accession>Q9H0E9</accession>
<accession>O43178</accession>
<accession>Q15355</accession>
<accession>Q58AB0</accession>
<accession>Q59GN0</accession>
<accession>Q969M9</accession>
<feature type="chain" id="PRO_0000211185" description="Bromodomain-containing protein 8">
    <location>
        <begin position="1"/>
        <end position="1235"/>
    </location>
</feature>
<feature type="domain" description="Bromo 1" evidence="4">
    <location>
        <begin position="706"/>
        <end position="811"/>
    </location>
</feature>
<feature type="domain" description="Bromo 2" evidence="4">
    <location>
        <begin position="1099"/>
        <end position="1207"/>
    </location>
</feature>
<feature type="region of interest" description="Disordered" evidence="5">
    <location>
        <begin position="186"/>
        <end position="205"/>
    </location>
</feature>
<feature type="region of interest" description="Disordered" evidence="5">
    <location>
        <begin position="551"/>
        <end position="597"/>
    </location>
</feature>
<feature type="region of interest" description="Disordered" evidence="5">
    <location>
        <begin position="621"/>
        <end position="672"/>
    </location>
</feature>
<feature type="region of interest" description="Disordered" evidence="5">
    <location>
        <begin position="827"/>
        <end position="848"/>
    </location>
</feature>
<feature type="region of interest" description="Disordered" evidence="5">
    <location>
        <begin position="903"/>
        <end position="940"/>
    </location>
</feature>
<feature type="region of interest" description="Disordered" evidence="5">
    <location>
        <begin position="966"/>
        <end position="999"/>
    </location>
</feature>
<feature type="coiled-coil region" evidence="3">
    <location>
        <begin position="97"/>
        <end position="171"/>
    </location>
</feature>
<feature type="compositionally biased region" description="Basic and acidic residues" evidence="5">
    <location>
        <begin position="831"/>
        <end position="846"/>
    </location>
</feature>
<feature type="compositionally biased region" description="Acidic residues" evidence="5">
    <location>
        <begin position="905"/>
        <end position="915"/>
    </location>
</feature>
<feature type="compositionally biased region" description="Basic and acidic residues" evidence="5">
    <location>
        <begin position="979"/>
        <end position="999"/>
    </location>
</feature>
<feature type="modified residue" description="N6-acetyllysine" evidence="2">
    <location>
        <position position="85"/>
    </location>
</feature>
<feature type="modified residue" description="Phosphoserine" evidence="2">
    <location>
        <position position="383"/>
    </location>
</feature>
<feature type="modified residue" description="Phosphoserine" evidence="24 28">
    <location>
        <position position="387"/>
    </location>
</feature>
<feature type="modified residue" description="N6-acetyllysine; alternate" evidence="25">
    <location>
        <position position="481"/>
    </location>
</feature>
<feature type="modified residue" description="Phosphoserine" evidence="28">
    <location>
        <position position="579"/>
    </location>
</feature>
<feature type="modified residue" description="Phosphoserine" evidence="27 28">
    <location>
        <position position="621"/>
    </location>
</feature>
<feature type="modified residue" description="Phosphoserine" evidence="22 29">
    <location>
        <position position="637"/>
    </location>
</feature>
<feature type="modified residue" description="Phosphoserine" evidence="22 27 29">
    <location>
        <position position="641"/>
    </location>
</feature>
<feature type="cross-link" description="Glycyl lysine isopeptide (Lys-Gly) (interchain with G-Cter in SUMO2)" evidence="34">
    <location>
        <position position="469"/>
    </location>
</feature>
<feature type="cross-link" description="Glycyl lysine isopeptide (Lys-Gly) (interchain with G-Cter in SUMO1); alternate" evidence="30">
    <location>
        <position position="481"/>
    </location>
</feature>
<feature type="cross-link" description="Glycyl lysine isopeptide (Lys-Gly) (interchain with G-Cter in SUMO2); alternate" evidence="30 31 32 33 34">
    <location>
        <position position="481"/>
    </location>
</feature>
<feature type="cross-link" description="Glycyl lysine isopeptide (Lys-Gly) (interchain with G-Cter in SUMO2)" evidence="31 34">
    <location>
        <position position="509"/>
    </location>
</feature>
<feature type="cross-link" description="Glycyl lysine isopeptide (Lys-Gly) (interchain with G-Cter in SUMO2)" evidence="31 34">
    <location>
        <position position="575"/>
    </location>
</feature>
<feature type="cross-link" description="Glycyl lysine isopeptide (Lys-Gly) (interchain with G-Cter in SUMO2)" evidence="31 33 34">
    <location>
        <position position="612"/>
    </location>
</feature>
<feature type="splice variant" id="VSP_012879" description="In isoform 3." evidence="17">
    <original>MATGTGKHKLLSTGPTEPWSIREKLCLASSVMRSGDQNWVSVSRAIKPFAEPGRPPDWFSQKHCASQYSELLETTETPKRKRGEKGEVVETVEDVIVRKLTAERVEELKKVIKETQERYRRLKRDAELIQAGHMDSRLDELCNDIAT</original>
    <variation>MSFAMTL</variation>
    <location>
        <begin position="1"/>
        <end position="147"/>
    </location>
</feature>
<feature type="splice variant" id="VSP_012880" description="In isoform 2, isoform 3 and isoform 4." evidence="16 17 18 19 20">
    <original>V</original>
    <variation>VTPGTLPSTPVTSFPGIPDTLPPGSAPLEAPMTPVTDDSPQKKMLGQKATPPPSPLLSELLKKGSLLPTSPRLV</variation>
    <location>
        <position position="215"/>
    </location>
</feature>
<feature type="splice variant" id="VSP_023187" description="In isoform 4." evidence="20">
    <location>
        <begin position="263"/>
        <end position="332"/>
    </location>
</feature>
<feature type="splice variant" id="VSP_012881" description="In isoform 3." evidence="17">
    <location>
        <begin position="263"/>
        <end position="301"/>
    </location>
</feature>
<feature type="splice variant" id="VSP_012882" description="In isoform 3." evidence="17">
    <location>
        <begin position="845"/>
        <end position="859"/>
    </location>
</feature>
<feature type="splice variant" id="VSP_023188" description="In isoform 4." evidence="20">
    <original>S</original>
    <variation>G</variation>
    <location>
        <position position="846"/>
    </location>
</feature>
<feature type="splice variant" id="VSP_023189" description="In isoform 4." evidence="20">
    <location>
        <begin position="847"/>
        <end position="975"/>
    </location>
</feature>
<feature type="splice variant" id="VSP_012883" description="In isoform 2 and isoform 3." evidence="16 17 18 19">
    <original>MGHEWVWLDSEQDHPNDSE</original>
    <variation>DGGTRGRRCAIEADMKMKK</variation>
    <location>
        <begin position="860"/>
        <end position="878"/>
    </location>
</feature>
<feature type="splice variant" id="VSP_012884" description="In isoform 2 and isoform 3." evidence="16 17 18 19">
    <location>
        <begin position="879"/>
        <end position="1235"/>
    </location>
</feature>
<feature type="splice variant" id="VSP_023190" description="In isoform 4." evidence="20">
    <original>QEGREIKASEGERE</original>
    <variation>GRRCAIEADMKMKK</variation>
    <location>
        <begin position="979"/>
        <end position="992"/>
    </location>
</feature>
<feature type="splice variant" id="VSP_023191" description="In isoform 4." evidence="20">
    <location>
        <begin position="993"/>
        <end position="1235"/>
    </location>
</feature>
<feature type="sequence variant" id="VAR_030695" description="In dbSNP:rs11750814." evidence="14">
    <original>T</original>
    <variation>M</variation>
    <location>
        <position position="490"/>
    </location>
</feature>
<feature type="sequence variant" id="VAR_048428" description="In dbSNP:rs6883021.">
    <original>L</original>
    <variation>P</variation>
    <location>
        <position position="896"/>
    </location>
</feature>
<feature type="sequence variant" id="VAR_048429" description="In dbSNP:rs412051." evidence="7 9 12 13 14 15">
    <original>Q</original>
    <variation>R</variation>
    <location>
        <position position="1198"/>
    </location>
</feature>
<feature type="sequence conflict" description="In Ref. 6; AAB87858." evidence="21" ref="6">
    <original>Q</original>
    <variation>H</variation>
    <location>
        <position position="306"/>
    </location>
</feature>
<feature type="sequence conflict" description="In Ref. 1; CAA60949 and 7; CAA63925." evidence="21" ref="1 7">
    <original>V</original>
    <variation>L</variation>
    <location>
        <position position="557"/>
    </location>
</feature>
<feature type="modified residue" description="Phosphothreonine" evidence="23 26 29">
    <location sequence="Q9H0E9-2">
        <position position="264"/>
    </location>
</feature>
<feature type="modified residue" description="Phosphoserine" evidence="23 26 29">
    <location sequence="Q9H0E9-2">
        <position position="268"/>
    </location>
</feature>
<feature type="modified residue" description="Phosphoserine" evidence="23">
    <location sequence="Q9H0E9-2">
        <position position="284"/>
    </location>
</feature>
<feature type="modified residue" description="Phosphoserine" evidence="27">
    <location sequence="Q9H0E9-2">
        <position position="924"/>
    </location>
</feature>
<feature type="modified residue" description="Phosphothreonine" evidence="23 26 29">
    <location sequence="Q9H0E9-3">
        <position position="124"/>
    </location>
</feature>
<feature type="modified residue" description="Phosphoserine" evidence="23 26 29">
    <location sequence="Q9H0E9-3">
        <position position="128"/>
    </location>
</feature>
<feature type="modified residue" description="Phosphoserine" evidence="23">
    <location sequence="Q9H0E9-3">
        <position position="144"/>
    </location>
</feature>
<feature type="modified residue" description="Phosphothreonine" evidence="23 26 29">
    <location sequence="Q9H0E9-4">
        <position position="264"/>
    </location>
</feature>
<feature type="modified residue" description="Phosphoserine" evidence="23 26 29">
    <location sequence="Q9H0E9-4">
        <position position="268"/>
    </location>
</feature>
<feature type="modified residue" description="Phosphoserine" evidence="23">
    <location sequence="Q9H0E9-4">
        <position position="284"/>
    </location>
</feature>
<protein>
    <recommendedName>
        <fullName>Bromodomain-containing protein 8</fullName>
    </recommendedName>
    <alternativeName>
        <fullName>Skeletal muscle abundant protein</fullName>
    </alternativeName>
    <alternativeName>
        <fullName>Skeletal muscle abundant protein 2</fullName>
    </alternativeName>
    <alternativeName>
        <fullName>Thyroid hormone receptor coactivating protein of 120 kDa</fullName>
        <shortName>TrCP120</shortName>
    </alternativeName>
    <alternativeName>
        <fullName>p120</fullName>
    </alternativeName>
</protein>
<comment type="function">
    <text evidence="6 8 10">May act as a coactivator during transcriptional activation by hormone-activated nuclear receptors (NR). Isoform 2 stimulates transcriptional activation by AR/DHTR, ESR1/NR3A1, RXRA/NR2B1 and THRB/ERBA2. At least isoform 1 and isoform 2 are components of the NuA4 histone acetyltransferase (HAT) complex which is involved in transcriptional activation of select genes principally by acetylation of nucleosomal histones H4 and H2A. This modification may both alter nucleosome - DNA interactions and promote interaction of the modified histones with other proteins which positively regulate transcription. This complex may be required for the activation of transcriptional programs associated with oncogene and proto-oncogene mediated growth induction, tumor suppressor mediated growth arrest and replicative senescence, apoptosis, and DNA repair. NuA4 may also play a direct role in DNA repair when recruited to sites of DNA damage. Component of a SWR1-like complex that specifically mediates the removal of histone H2A.Z/H2AZ1 from the nucleosome.</text>
</comment>
<comment type="subunit">
    <text evidence="1 6 8 10 13">Component of the NuA4 histone acetyltransferase complex which contains the catalytic subunit KAT5/TIP60 and the subunits EP400, TRRAP/PAF400, BRD8/SMAP, EPC1, DMAP1/DNMAP1, RUVBL1/TIP49, RUVBL2, ING3, actin, ACTL6A/BAF53A, MORF4L1/MRG15, MORF4L2/MRGX, MRGBP, YEATS4/GAS41, VPS72/YL1 and MEAF6. The NuA4 complex interacts with MYC and the adenovirus E1A protein. Component of a NuA4-related complex which contains EP400, TRRAP/PAF400, SRCAP, BRD8/SMAP, EPC1, DMAP1/DNMAP1, RUVBL1/TIP49, RUVBL2, actin, ACTL6A/BAF53A, VPS72 and YEATS4/GAS41. BRD8 isoform 2 interacts with RXRA/NR2B1 and THRB/ERBA2 (By similarity). Component of a SWR1-like complex.</text>
</comment>
<comment type="interaction">
    <interactant intactId="EBI-769266">
        <id>Q9H0E9</id>
    </interactant>
    <interactant intactId="EBI-769270">
        <id>Q9H2F5</id>
        <label>EPC1</label>
    </interactant>
    <organismsDiffer>false</organismsDiffer>
    <experiments>5</experiments>
</comment>
<comment type="interaction">
    <interactant intactId="EBI-10304361">
        <id>Q9H0E9-2</id>
    </interactant>
    <interactant intactId="EBI-12089140">
        <id>A0A0A0MR80</id>
        <label>EP400</label>
    </interactant>
    <organismsDiffer>false</organismsDiffer>
    <experiments>3</experiments>
</comment>
<comment type="interaction">
    <interactant intactId="EBI-10304361">
        <id>Q9H0E9-2</id>
    </interactant>
    <interactant intactId="EBI-5661036">
        <id>A1L4K1</id>
        <label>FSD2</label>
    </interactant>
    <organismsDiffer>false</organismsDiffer>
    <experiments>6</experiments>
</comment>
<comment type="interaction">
    <interactant intactId="EBI-10304361">
        <id>Q9H0E9-2</id>
    </interactant>
    <interactant intactId="EBI-348259">
        <id>Q96EZ8</id>
        <label>MCRS1</label>
    </interactant>
    <organismsDiffer>false</organismsDiffer>
    <experiments>3</experiments>
</comment>
<comment type="interaction">
    <interactant intactId="EBI-10304361">
        <id>Q9H0E9-2</id>
    </interactant>
    <interactant intactId="EBI-1104552">
        <id>Q9NYP9</id>
        <label>MIS18A</label>
    </interactant>
    <organismsDiffer>false</organismsDiffer>
    <experiments>3</experiments>
</comment>
<comment type="interaction">
    <interactant intactId="EBI-10304361">
        <id>Q9H0E9-2</id>
    </interactant>
    <interactant intactId="EBI-714158">
        <id>Q13526</id>
        <label>PIN1</label>
    </interactant>
    <organismsDiffer>false</organismsDiffer>
    <experiments>3</experiments>
</comment>
<comment type="subcellular location">
    <subcellularLocation>
        <location evidence="11">Nucleus</location>
    </subcellularLocation>
</comment>
<comment type="alternative products">
    <event type="alternative splicing"/>
    <isoform>
        <id>Q9H0E9-1</id>
        <name>1</name>
        <sequence type="displayed"/>
    </isoform>
    <isoform>
        <id>Q9H0E9-2</id>
        <name>2</name>
        <sequence type="described" ref="VSP_012880 VSP_012883 VSP_012884"/>
    </isoform>
    <isoform>
        <id>Q9H0E9-3</id>
        <name>3</name>
        <sequence type="described" ref="VSP_012879 VSP_012880 VSP_012881 VSP_012882 VSP_012883 VSP_012884"/>
    </isoform>
    <isoform>
        <id>Q9H0E9-4</id>
        <name>4</name>
        <sequence type="described" ref="VSP_012880 VSP_023187 VSP_023188 VSP_023189 VSP_023190 VSP_023191"/>
    </isoform>
</comment>
<comment type="tissue specificity">
    <text evidence="12">Expressed in adipose tissue, brain, heart, kidney, liver, lung, pancreas, placenta and skeletal muscle.</text>
</comment>
<comment type="caution">
    <text evidence="21">It is uncertain whether Met-1 or Met-32 is the initiator.</text>
</comment>
<comment type="sequence caution" evidence="21">
    <conflict type="erroneous initiation">
        <sequence resource="EMBL-CDS" id="AAB87858"/>
    </conflict>
    <text>Truncated N-terminus.</text>
</comment>
<comment type="sequence caution" evidence="21">
    <conflict type="erroneous initiation">
        <sequence resource="EMBL-CDS" id="AAH08039"/>
    </conflict>
    <text>Truncated N-terminus.</text>
</comment>
<comment type="sequence caution" evidence="21">
    <conflict type="erroneous initiation">
        <sequence resource="EMBL-CDS" id="AAH08076"/>
    </conflict>
    <text>Truncated N-terminus.</text>
</comment>
<comment type="sequence caution" evidence="21">
    <conflict type="erroneous initiation">
        <sequence resource="EMBL-CDS" id="CAA63925"/>
    </conflict>
    <text>Truncated N-terminus.</text>
</comment>
<gene>
    <name type="primary">BRD8</name>
    <name type="synonym">SMAP</name>
    <name type="synonym">SMAP2</name>
</gene>
<keyword id="KW-0007">Acetylation</keyword>
<keyword id="KW-0025">Alternative splicing</keyword>
<keyword id="KW-0103">Bromodomain</keyword>
<keyword id="KW-0156">Chromatin regulator</keyword>
<keyword id="KW-0175">Coiled coil</keyword>
<keyword id="KW-0903">Direct protein sequencing</keyword>
<keyword id="KW-0341">Growth regulation</keyword>
<keyword id="KW-1017">Isopeptide bond</keyword>
<keyword id="KW-0539">Nucleus</keyword>
<keyword id="KW-0597">Phosphoprotein</keyword>
<keyword id="KW-1267">Proteomics identification</keyword>
<keyword id="KW-1185">Reference proteome</keyword>
<keyword id="KW-0677">Repeat</keyword>
<keyword id="KW-0804">Transcription</keyword>
<keyword id="KW-0805">Transcription regulation</keyword>
<keyword id="KW-0832">Ubl conjugation</keyword>
<sequence>MATGTGKHKLLSTGPTEPWSIREKLCLASSVMRSGDQNWVSVSRAIKPFAEPGRPPDWFSQKHCASQYSELLETTETPKRKRGEKGEVVETVEDVIVRKLTAERVEELKKVIKETQERYRRLKRDAELIQAGHMDSRLDELCNDIATKKKLEEEEAEVKRKATDAAYQARQAVKTPPRRLPTVMVRSPIDSASPGGDYPLGDLTPTTMEEATSGVNESEMAVASGHLNSTGVLLEVGGVLPMIHGGEIQQTPNTVAASPAASGAPTLSRLLEAGPTQFTTPLASFTTVASEPPVKLVPPPVESVSQATIVMMPALPAPSSAPAVSTTESVAPVSQPDNCVPMEAVGDPHTVTVSMDSSEISMIINSIKEECFRSGVAEAPVGSKAPSIDGKEELDLAEKMDIAVSYTGEELDFETVGDIIAIIEDKVDDHPEVLDVAAVEAALSFCEENDDPQSLPGPWEHPIQQERDKPVPLPAPEMTVKQERLDFEETENKGIHELVDIREPSAEIKVEPAEPEPVISGAEIVAGVVPATSMEPPELRSQDLDEELGSTAAGEIVEADVAIGKGDETPLTNVKTEASPESMLSPSHGSNPIEDPLEAETQHKFEMSDSLKEESGTIFGSQIKDAPGEDEEEDGVSEAASLEEPKEEDQGEGYLSEMDNEPPVSESDDGFSIHNATLQSHTLADSIPSSPASSQFSVCSEDQEAIQAQKIWKKAIMLVWRAAANHRYANVFLQPVTDDIAPGYHSIVQRPMDLSTIKKNIENGLIRSTAEFQRDIMLMFQNAVMYNSSDHDVYHMAVEMQRDVLEQIQQFLATQLIMQTSESGISAKSLRGRDSTRKQDASEKDSVPMGSPAFLLSLFMGHEWVWLDSEQDHPNDSELSNDCRSLFSSWDSSLDLDVGNWRETEDPEAEELEESSPEREPSELLVGDGGSEESQEAARKASHQNLLHFLSEVAYLMEPLCISSNESSEGCCPPSGTRQEGREIKASEGERELCRETEELSAKGDPLVAEKPLGENGKPEVASAPSVICTVQGLLTESEEGEAQQESKGEDQGEVYVSEMEDQPPSGECDDAFNIKETPLVDTLFSHATSSKLTDLSQDDPVQDHLLFKKTLLPVWKMIASHRFSSPFLKPVSERQAPGYKDVVKRPMDLTSLKRNLSKGRIRTMAQFLRDLMLMFQNAVMYNDSDHHVYHMAVEMRQEVLEQIQVLNIWLDKRKGSSSLEGEPANPVDDGKPVF</sequence>
<evidence type="ECO:0000250" key="1"/>
<evidence type="ECO:0000250" key="2">
    <source>
        <dbReference type="UniProtKB" id="Q8R3B7"/>
    </source>
</evidence>
<evidence type="ECO:0000255" key="3"/>
<evidence type="ECO:0000255" key="4">
    <source>
        <dbReference type="PROSITE-ProRule" id="PRU00035"/>
    </source>
</evidence>
<evidence type="ECO:0000256" key="5">
    <source>
        <dbReference type="SAM" id="MobiDB-lite"/>
    </source>
</evidence>
<evidence type="ECO:0000269" key="6">
    <source>
    </source>
</evidence>
<evidence type="ECO:0000269" key="7">
    <source>
    </source>
</evidence>
<evidence type="ECO:0000269" key="8">
    <source>
    </source>
</evidence>
<evidence type="ECO:0000269" key="9">
    <source>
    </source>
</evidence>
<evidence type="ECO:0000269" key="10">
    <source>
    </source>
</evidence>
<evidence type="ECO:0000269" key="11">
    <source>
    </source>
</evidence>
<evidence type="ECO:0000269" key="12">
    <source>
    </source>
</evidence>
<evidence type="ECO:0000269" key="13">
    <source>
    </source>
</evidence>
<evidence type="ECO:0000269" key="14">
    <source ref="3"/>
</evidence>
<evidence type="ECO:0000269" key="15">
    <source ref="7"/>
</evidence>
<evidence type="ECO:0000303" key="16">
    <source>
    </source>
</evidence>
<evidence type="ECO:0000303" key="17">
    <source>
    </source>
</evidence>
<evidence type="ECO:0000303" key="18">
    <source>
    </source>
</evidence>
<evidence type="ECO:0000303" key="19">
    <source ref="3"/>
</evidence>
<evidence type="ECO:0000303" key="20">
    <source ref="7"/>
</evidence>
<evidence type="ECO:0000305" key="21"/>
<evidence type="ECO:0007744" key="22">
    <source>
    </source>
</evidence>
<evidence type="ECO:0007744" key="23">
    <source>
    </source>
</evidence>
<evidence type="ECO:0007744" key="24">
    <source>
    </source>
</evidence>
<evidence type="ECO:0007744" key="25">
    <source>
    </source>
</evidence>
<evidence type="ECO:0007744" key="26">
    <source>
    </source>
</evidence>
<evidence type="ECO:0007744" key="27">
    <source>
    </source>
</evidence>
<evidence type="ECO:0007744" key="28">
    <source>
    </source>
</evidence>
<evidence type="ECO:0007744" key="29">
    <source>
    </source>
</evidence>
<evidence type="ECO:0007744" key="30">
    <source>
    </source>
</evidence>
<evidence type="ECO:0007744" key="31">
    <source>
    </source>
</evidence>
<evidence type="ECO:0007744" key="32">
    <source>
    </source>
</evidence>
<evidence type="ECO:0007744" key="33">
    <source>
    </source>
</evidence>
<evidence type="ECO:0007744" key="34">
    <source>
    </source>
</evidence>
<proteinExistence type="evidence at protein level"/>